<protein>
    <recommendedName>
        <fullName evidence="1">Elongation factor Ts</fullName>
        <shortName evidence="1">EF-Ts</shortName>
    </recommendedName>
</protein>
<dbReference type="EMBL" id="CP000116">
    <property type="protein sequence ID" value="AAZ96739.1"/>
    <property type="molecule type" value="Genomic_DNA"/>
</dbReference>
<dbReference type="RefSeq" id="WP_011311298.1">
    <property type="nucleotide sequence ID" value="NC_007404.1"/>
</dbReference>
<dbReference type="SMR" id="Q3SKN8"/>
<dbReference type="STRING" id="292415.Tbd_0786"/>
<dbReference type="KEGG" id="tbd:Tbd_0786"/>
<dbReference type="eggNOG" id="COG0264">
    <property type="taxonomic scope" value="Bacteria"/>
</dbReference>
<dbReference type="HOGENOM" id="CLU_047155_0_2_4"/>
<dbReference type="OrthoDB" id="9808348at2"/>
<dbReference type="Proteomes" id="UP000008291">
    <property type="component" value="Chromosome"/>
</dbReference>
<dbReference type="GO" id="GO:0005737">
    <property type="term" value="C:cytoplasm"/>
    <property type="evidence" value="ECO:0007669"/>
    <property type="project" value="UniProtKB-SubCell"/>
</dbReference>
<dbReference type="GO" id="GO:0003746">
    <property type="term" value="F:translation elongation factor activity"/>
    <property type="evidence" value="ECO:0007669"/>
    <property type="project" value="UniProtKB-UniRule"/>
</dbReference>
<dbReference type="CDD" id="cd14275">
    <property type="entry name" value="UBA_EF-Ts"/>
    <property type="match status" value="1"/>
</dbReference>
<dbReference type="FunFam" id="1.10.286.20:FF:000001">
    <property type="entry name" value="Elongation factor Ts"/>
    <property type="match status" value="1"/>
</dbReference>
<dbReference type="FunFam" id="1.10.8.10:FF:000001">
    <property type="entry name" value="Elongation factor Ts"/>
    <property type="match status" value="1"/>
</dbReference>
<dbReference type="Gene3D" id="1.10.286.20">
    <property type="match status" value="1"/>
</dbReference>
<dbReference type="Gene3D" id="1.10.8.10">
    <property type="entry name" value="DNA helicase RuvA subunit, C-terminal domain"/>
    <property type="match status" value="1"/>
</dbReference>
<dbReference type="Gene3D" id="3.30.479.20">
    <property type="entry name" value="Elongation factor Ts, dimerisation domain"/>
    <property type="match status" value="2"/>
</dbReference>
<dbReference type="HAMAP" id="MF_00050">
    <property type="entry name" value="EF_Ts"/>
    <property type="match status" value="1"/>
</dbReference>
<dbReference type="InterPro" id="IPR036402">
    <property type="entry name" value="EF-Ts_dimer_sf"/>
</dbReference>
<dbReference type="InterPro" id="IPR001816">
    <property type="entry name" value="Transl_elong_EFTs/EF1B"/>
</dbReference>
<dbReference type="InterPro" id="IPR014039">
    <property type="entry name" value="Transl_elong_EFTs/EF1B_dimer"/>
</dbReference>
<dbReference type="InterPro" id="IPR018101">
    <property type="entry name" value="Transl_elong_Ts_CS"/>
</dbReference>
<dbReference type="InterPro" id="IPR009060">
    <property type="entry name" value="UBA-like_sf"/>
</dbReference>
<dbReference type="NCBIfam" id="TIGR00116">
    <property type="entry name" value="tsf"/>
    <property type="match status" value="1"/>
</dbReference>
<dbReference type="PANTHER" id="PTHR11741">
    <property type="entry name" value="ELONGATION FACTOR TS"/>
    <property type="match status" value="1"/>
</dbReference>
<dbReference type="PANTHER" id="PTHR11741:SF0">
    <property type="entry name" value="ELONGATION FACTOR TS, MITOCHONDRIAL"/>
    <property type="match status" value="1"/>
</dbReference>
<dbReference type="Pfam" id="PF00889">
    <property type="entry name" value="EF_TS"/>
    <property type="match status" value="1"/>
</dbReference>
<dbReference type="SUPFAM" id="SSF54713">
    <property type="entry name" value="Elongation factor Ts (EF-Ts), dimerisation domain"/>
    <property type="match status" value="2"/>
</dbReference>
<dbReference type="SUPFAM" id="SSF46934">
    <property type="entry name" value="UBA-like"/>
    <property type="match status" value="1"/>
</dbReference>
<dbReference type="PROSITE" id="PS01127">
    <property type="entry name" value="EF_TS_2"/>
    <property type="match status" value="1"/>
</dbReference>
<gene>
    <name evidence="1" type="primary">tsf</name>
    <name type="ordered locus">Tbd_0786</name>
</gene>
<keyword id="KW-0963">Cytoplasm</keyword>
<keyword id="KW-0251">Elongation factor</keyword>
<keyword id="KW-0648">Protein biosynthesis</keyword>
<keyword id="KW-1185">Reference proteome</keyword>
<accession>Q3SKN8</accession>
<organism>
    <name type="scientific">Thiobacillus denitrificans (strain ATCC 25259 / T1)</name>
    <dbReference type="NCBI Taxonomy" id="292415"/>
    <lineage>
        <taxon>Bacteria</taxon>
        <taxon>Pseudomonadati</taxon>
        <taxon>Pseudomonadota</taxon>
        <taxon>Betaproteobacteria</taxon>
        <taxon>Nitrosomonadales</taxon>
        <taxon>Thiobacillaceae</taxon>
        <taxon>Thiobacillus</taxon>
    </lineage>
</organism>
<comment type="function">
    <text evidence="1">Associates with the EF-Tu.GDP complex and induces the exchange of GDP to GTP. It remains bound to the aminoacyl-tRNA.EF-Tu.GTP complex up to the GTP hydrolysis stage on the ribosome.</text>
</comment>
<comment type="subcellular location">
    <subcellularLocation>
        <location evidence="1">Cytoplasm</location>
    </subcellularLocation>
</comment>
<comment type="similarity">
    <text evidence="1">Belongs to the EF-Ts family.</text>
</comment>
<proteinExistence type="inferred from homology"/>
<evidence type="ECO:0000255" key="1">
    <source>
        <dbReference type="HAMAP-Rule" id="MF_00050"/>
    </source>
</evidence>
<feature type="chain" id="PRO_0000241546" description="Elongation factor Ts">
    <location>
        <begin position="1"/>
        <end position="290"/>
    </location>
</feature>
<feature type="region of interest" description="Involved in Mg(2+) ion dislocation from EF-Tu" evidence="1">
    <location>
        <begin position="82"/>
        <end position="85"/>
    </location>
</feature>
<sequence length="290" mass="30981">MAEITASMVKDLREKTDAPMMDCKKALTEAGGDMQKAEEILRVRFGNKAAKSAGRVAAEGVVTIAISPDGKSAAMVEVNCETDFVAKNDDFLALSAALAEMVLTQKPADVAALSALPYKNSTVEGFRTELVGKIGENMSVRRFVRLDGQGKFASYIHGGKIGVLVDVTGDEAIAKDIAMHIAASKPKSLDASGVPQDLLDTERRVAIEKAKEAGKPEAMLEKIAEGTVQKFLKEVTLLSQPFVKDDKQTVEQVLKSKNSQCHGFTMYVVGEGIEKKVSDFAAEVAAAAKV</sequence>
<reference key="1">
    <citation type="journal article" date="2006" name="J. Bacteriol.">
        <title>The genome sequence of the obligately chemolithoautotrophic, facultatively anaerobic bacterium Thiobacillus denitrificans.</title>
        <authorList>
            <person name="Beller H.R."/>
            <person name="Chain P.S."/>
            <person name="Letain T.E."/>
            <person name="Chakicherla A."/>
            <person name="Larimer F.W."/>
            <person name="Richardson P.M."/>
            <person name="Coleman M.A."/>
            <person name="Wood A.P."/>
            <person name="Kelly D.P."/>
        </authorList>
    </citation>
    <scope>NUCLEOTIDE SEQUENCE [LARGE SCALE GENOMIC DNA]</scope>
    <source>
        <strain>ATCC 25259 / T1</strain>
    </source>
</reference>
<name>EFTS_THIDA</name>